<gene>
    <name type="primary">kctd15</name>
</gene>
<feature type="chain" id="PRO_0000247256" description="BTB/POZ domain-containing protein kctd15">
    <location>
        <begin position="1"/>
        <end position="255"/>
    </location>
</feature>
<feature type="domain" description="BTB">
    <location>
        <begin position="30"/>
        <end position="100"/>
    </location>
</feature>
<evidence type="ECO:0000250" key="1">
    <source>
        <dbReference type="UniProtKB" id="Q6DC02"/>
    </source>
</evidence>
<evidence type="ECO:0000250" key="2">
    <source>
        <dbReference type="UniProtKB" id="Q6DCX3"/>
    </source>
</evidence>
<evidence type="ECO:0000250" key="3">
    <source>
        <dbReference type="UniProtKB" id="Q8K0E1"/>
    </source>
</evidence>
<evidence type="ECO:0000250" key="4">
    <source>
        <dbReference type="UniProtKB" id="Q96SI1"/>
    </source>
</evidence>
<organism>
    <name type="scientific">Xenopus tropicalis</name>
    <name type="common">Western clawed frog</name>
    <name type="synonym">Silurana tropicalis</name>
    <dbReference type="NCBI Taxonomy" id="8364"/>
    <lineage>
        <taxon>Eukaryota</taxon>
        <taxon>Metazoa</taxon>
        <taxon>Chordata</taxon>
        <taxon>Craniata</taxon>
        <taxon>Vertebrata</taxon>
        <taxon>Euteleostomi</taxon>
        <taxon>Amphibia</taxon>
        <taxon>Batrachia</taxon>
        <taxon>Anura</taxon>
        <taxon>Pipoidea</taxon>
        <taxon>Pipidae</taxon>
        <taxon>Xenopodinae</taxon>
        <taxon>Xenopus</taxon>
        <taxon>Silurana</taxon>
    </lineage>
</organism>
<protein>
    <recommendedName>
        <fullName>BTB/POZ domain-containing protein kctd15</fullName>
    </recommendedName>
    <alternativeName>
        <fullName>Potassium channel tetramerization domain-containing protein 15</fullName>
    </alternativeName>
</protein>
<accession>Q6P3P4</accession>
<sequence>MSRLSLTRSPVSPLAAQGIPLPAQLTKSNAPVHIDVGGHMYTSSLATLTKYPDSRISRLFNGTEPIVLDSLKQHYFIDRDGEIFRYILSFLRTSKLLLPEDFKEFNLLYEEAKYYQLHPMVKELERWKQDKEHRKHFQPCDCLVVRVTPDLGERIALSGEKALIEEIFPETGDVMCNSVNAGWNQDPTHVIRFPLNGYCRLNSVQVLERMFQKGFHVAASCGGGVDSSQFSEYVLCREDRRMQPNTMRIKQEPLD</sequence>
<comment type="function">
    <text evidence="2">During embryonic development, interferes with neural crest formation. Inhibits AP2 transcriptional activity by interaction with its activation domain (By similarity).</text>
</comment>
<comment type="subunit">
    <text evidence="1 4">Forms oligomers, predominantly homopentamers (By similarity). Interacts with TFAP2A; this interaction inhibits TFAP2A transcriptional activation.</text>
</comment>
<comment type="subcellular location">
    <subcellularLocation>
        <location evidence="3">Nucleus</location>
    </subcellularLocation>
</comment>
<reference key="1">
    <citation type="submission" date="2003-12" db="EMBL/GenBank/DDBJ databases">
        <authorList>
            <consortium name="NIH - Xenopus Gene Collection (XGC) project"/>
        </authorList>
    </citation>
    <scope>NUCLEOTIDE SEQUENCE [LARGE SCALE MRNA]</scope>
    <source>
        <tissue>Embryo</tissue>
    </source>
</reference>
<proteinExistence type="evidence at transcript level"/>
<dbReference type="EMBL" id="BC063913">
    <property type="protein sequence ID" value="AAH63913.1"/>
    <property type="molecule type" value="mRNA"/>
</dbReference>
<dbReference type="RefSeq" id="NP_989239.1">
    <property type="nucleotide sequence ID" value="NM_203908.1"/>
</dbReference>
<dbReference type="RefSeq" id="XP_012816219.1">
    <property type="nucleotide sequence ID" value="XM_012960765.3"/>
</dbReference>
<dbReference type="RefSeq" id="XP_017948462.1">
    <property type="nucleotide sequence ID" value="XM_018092973.2"/>
</dbReference>
<dbReference type="SMR" id="Q6P3P4"/>
<dbReference type="FunCoup" id="Q6P3P4">
    <property type="interactions" value="300"/>
</dbReference>
<dbReference type="STRING" id="8364.ENSXETP00000004572"/>
<dbReference type="PaxDb" id="8364-ENSXETP00000061753"/>
<dbReference type="DNASU" id="394848"/>
<dbReference type="GeneID" id="394848"/>
<dbReference type="KEGG" id="xtr:394848"/>
<dbReference type="AGR" id="Xenbase:XB-GENE-944069"/>
<dbReference type="CTD" id="79047"/>
<dbReference type="Xenbase" id="XB-GENE-944069">
    <property type="gene designation" value="kctd15"/>
</dbReference>
<dbReference type="eggNOG" id="KOG2723">
    <property type="taxonomic scope" value="Eukaryota"/>
</dbReference>
<dbReference type="HOGENOM" id="CLU_061268_1_0_1"/>
<dbReference type="InParanoid" id="Q6P3P4"/>
<dbReference type="OMA" id="FCDCIAV"/>
<dbReference type="OrthoDB" id="2414723at2759"/>
<dbReference type="PhylomeDB" id="Q6P3P4"/>
<dbReference type="Proteomes" id="UP000008143">
    <property type="component" value="Chromosome 4"/>
</dbReference>
<dbReference type="Bgee" id="ENSXETG00000016868">
    <property type="expression patterns" value="Expressed in gastrula and 3 other cell types or tissues"/>
</dbReference>
<dbReference type="ExpressionAtlas" id="Q6P3P4">
    <property type="expression patterns" value="baseline"/>
</dbReference>
<dbReference type="GO" id="GO:0005634">
    <property type="term" value="C:nucleus"/>
    <property type="evidence" value="ECO:0007669"/>
    <property type="project" value="UniProtKB-SubCell"/>
</dbReference>
<dbReference type="GO" id="GO:0051260">
    <property type="term" value="P:protein homooligomerization"/>
    <property type="evidence" value="ECO:0007669"/>
    <property type="project" value="InterPro"/>
</dbReference>
<dbReference type="CDD" id="cd18388">
    <property type="entry name" value="BTB_POZ_KCTD15"/>
    <property type="match status" value="1"/>
</dbReference>
<dbReference type="FunFam" id="3.30.710.10:FF:000003">
    <property type="entry name" value="BTB/POZ domain-containing protein KCTD6 isoform X2"/>
    <property type="match status" value="1"/>
</dbReference>
<dbReference type="Gene3D" id="3.30.710.10">
    <property type="entry name" value="Potassium Channel Kv1.1, Chain A"/>
    <property type="match status" value="1"/>
</dbReference>
<dbReference type="InterPro" id="IPR000210">
    <property type="entry name" value="BTB/POZ_dom"/>
</dbReference>
<dbReference type="InterPro" id="IPR048595">
    <property type="entry name" value="KCTD1-15-like_C"/>
</dbReference>
<dbReference type="InterPro" id="IPR045904">
    <property type="entry name" value="KCTD15_T1-type_BTB"/>
</dbReference>
<dbReference type="InterPro" id="IPR011333">
    <property type="entry name" value="SKP1/BTB/POZ_sf"/>
</dbReference>
<dbReference type="InterPro" id="IPR003131">
    <property type="entry name" value="T1-type_BTB"/>
</dbReference>
<dbReference type="PANTHER" id="PTHR14499:SF27">
    <property type="entry name" value="BTB_POZ DOMAIN-CONTAINING PROTEIN KCTD15"/>
    <property type="match status" value="1"/>
</dbReference>
<dbReference type="PANTHER" id="PTHR14499">
    <property type="entry name" value="POTASSIUM CHANNEL TETRAMERIZATION DOMAIN-CONTAINING"/>
    <property type="match status" value="1"/>
</dbReference>
<dbReference type="Pfam" id="PF02214">
    <property type="entry name" value="BTB_2"/>
    <property type="match status" value="1"/>
</dbReference>
<dbReference type="Pfam" id="PF20871">
    <property type="entry name" value="KCTD1-15_CTD"/>
    <property type="match status" value="1"/>
</dbReference>
<dbReference type="SMART" id="SM00225">
    <property type="entry name" value="BTB"/>
    <property type="match status" value="1"/>
</dbReference>
<dbReference type="SUPFAM" id="SSF54695">
    <property type="entry name" value="POZ domain"/>
    <property type="match status" value="1"/>
</dbReference>
<name>KCD15_XENTR</name>
<keyword id="KW-0217">Developmental protein</keyword>
<keyword id="KW-0539">Nucleus</keyword>
<keyword id="KW-1185">Reference proteome</keyword>